<evidence type="ECO:0000250" key="1"/>
<evidence type="ECO:0000255" key="2"/>
<evidence type="ECO:0000255" key="3">
    <source>
        <dbReference type="PROSITE-ProRule" id="PRU00039"/>
    </source>
</evidence>
<evidence type="ECO:0000255" key="4">
    <source>
        <dbReference type="PROSITE-ProRule" id="PRU00076"/>
    </source>
</evidence>
<evidence type="ECO:0000255" key="5">
    <source>
        <dbReference type="PROSITE-ProRule" id="PRU00122"/>
    </source>
</evidence>
<evidence type="ECO:0000269" key="6">
    <source>
    </source>
</evidence>
<evidence type="ECO:0000269" key="7">
    <source>
    </source>
</evidence>
<evidence type="ECO:0000269" key="8">
    <source>
    </source>
</evidence>
<evidence type="ECO:0000269" key="9">
    <source>
    </source>
</evidence>
<evidence type="ECO:0000303" key="10">
    <source ref="3"/>
</evidence>
<evidence type="ECO:0000305" key="11"/>
<comment type="function">
    <text evidence="1 6">Thought to act as molecular guidance cue in cellular migration, and function appears to be mediated by interaction with roundabout homolog receptors. During neural development involved in axonal navigation at the ventral midline of the neural tube and projection of axons to different regions. SLIT1 and SLIT2 together seem to be essential for midline guidance in the forebrain by acting as repulsive signal preventing inappropriate midline crossing by axons projecting from the olfactory bulb (By similarity).</text>
</comment>
<comment type="subunit">
    <text evidence="1 8">Interacts with ROBO1 (By similarity) and GREM1.</text>
</comment>
<comment type="subcellular location">
    <subcellularLocation>
        <location evidence="1">Secreted</location>
    </subcellularLocation>
</comment>
<comment type="alternative products">
    <event type="alternative splicing"/>
    <isoform>
        <id>O88279-1</id>
        <name>1</name>
        <sequence type="displayed"/>
    </isoform>
    <isoform>
        <id>O88279-2</id>
        <name>2</name>
        <name>Sb</name>
        <sequence type="described" ref="VSP_009710 VSP_009711"/>
    </isoform>
    <isoform>
        <id>O88279-3</id>
        <name>3</name>
        <name>La</name>
        <sequence type="described" ref="VSP_009712 VSP_009713"/>
    </isoform>
    <isoform>
        <id>O88279-4</id>
        <name>4</name>
        <name>Sa</name>
        <sequence type="described" ref="VSP_009709"/>
    </isoform>
</comment>
<comment type="tissue specificity">
    <text evidence="9">In adult brains expressed in the hippocampus, cerebral cortex, and olfactory bulb but not in the cerebellum. In embryo expressed in cerebral cortex.</text>
</comment>
<comment type="developmental stage">
    <text evidence="7">Detected between 15 dpc and 20 dpc, between P0 and P10, and in adult in different regions of the telencephalon and diencephalon.</text>
</comment>
<comment type="sequence caution" evidence="11">
    <conflict type="erroneous initiation">
        <sequence resource="EMBL-CDS" id="BAC21664"/>
    </conflict>
</comment>
<sequence>MALTPQRGSSSGLSRPELWLLLWAAAWRLGATACPALCTCTGTTVDCHGTGLQAIPKNIPRNTERLELNGNNITRIHKNDFAGLKQLRVLQLMENQIGAVERGAFDDMKELERLRLNRNQLQVLPELLFQNNQALSRLDLSENSLQAVPRKAFRGATDLKNLQLDKNQISCIEEGAFRALRGLEVLTLNNNNITTIPVSSFNHMPKLRTFRLHSNHLFCDCHLAWLSQWLRQRPTIGLFTQCSGPASLRGLNVAEVQKSEFSCSGQGEAAQVPACTLSSGSCPAMCSCSNGIVDCRGKGLTAIPANLPETMTEIRLELNGIKSIPPGAFSPYRKLRRIDLSNNQIAEIAPDAFQGLRSLNSLVLYGNKITDLPRGVFGGLYTLQLLLLNANKINCIRPDAFQDLQNLSLLSLYDNKIQSLAKGTFTSLRAIQTLHLAQNPFICDCNLKWLADFLRTNPIETTGARCASPRRLANKRIGQIKSKKFRCSAKEQYFIPGTEDYHLNSECTSDVACPHKCRCEASVVECSGLKLSKIPERIPQSTTELRLNNNEISILEATGLFKKLSHLKKINLSNNKVSEIEDGTFEGATSVSELHLTANQLESVRSGMFRGLDGLRTLMLRNNRISCIHNDSFTGLRNVRLLSLYDNHITTISPGAFDTLQALSTLNLLANPFNCNCQLAWLGDWLRKRKIVTGNPRCQNPDFLRQIPLQDVAFPDFRCEEGQEEVGCLPRPQCPQECACLDTVVRCSNKHLQALPKGIPKNVTELYLDGNQFTLVPGQLSTFKYLQLVDLSNNKISSLSNSSFTNMSQLTTLILSYNALQCIPPLAFQGLRSLRLLSLHGNDVSTLQEGIFADVTSLSHLAIGANPLYCDCHLRWLSSWVKTGYKEPGIARCAGPPEMEGKLLLTTPAKKFECQGPPSLAVQAKCDPCLSSPCQNQGTCHNDPLEVYRCTCPSGYKGRNCEVSLDSCSSNPCGNGGTCHAQEGEDAGFTCSCPSGFEGLTCGMNTDDCVKHDCVNGGVCVDGIGNYTCQCPLQYTGRACEQLVDFCSPDLNPCQHEAQCVGTPEGPRCECVPGYTGDNCSKNQDDCKDHQCQNGAQCVDEINSYACLCAEGYSGQLCEIPPAPRNSCEGTECQNGANCVDQGSRPVCQCLPGFGGPECEKLLSVNFVDRDTYLQFTDLQNWPRANITLQVSTAEDNGILLYNGDNDHIAVELYQGHVRVSYDPGSYPSSAIYSAETINDGQFHTVELVTFDQMVNLSIDGGSPMTMDNFGKHYTLNSEAPLYVGGMPVDVNSAAFRLWQILNGTSFHGCIRNLYINNELQDFTKTQMKPGVVPGCEPCRKLYCLHGICQPNATPGPVCHCEAGWGGLHCDQPVDGPCHGHKCVHGKCVPLDALAYSCQCQDGYSGALCNQVGAVAEPCGGLQCLHGHCQASATRGAHCVCSPGFSGELCEQESECRGDPVRDFHRVQRGYAICQTTRPLSWVECRGACPGQGCCQGLRLKRRKLTFECSDGTSFAEEVEKPTKCGCAPCA</sequence>
<protein>
    <recommendedName>
        <fullName>Slit homolog 1 protein</fullName>
        <shortName>Slit-1</shortName>
    </recommendedName>
    <alternativeName>
        <fullName>Multiple epidermal growth factor-like domains protein 4</fullName>
        <shortName>Multiple EGF-like domains protein 4</shortName>
    </alternativeName>
</protein>
<proteinExistence type="evidence at protein level"/>
<feature type="signal peptide" evidence="2">
    <location>
        <begin position="1"/>
        <end position="33"/>
    </location>
</feature>
<feature type="chain" id="PRO_0000007724" description="Slit homolog 1 protein">
    <location>
        <begin position="34"/>
        <end position="1531"/>
    </location>
</feature>
<feature type="domain" description="LRRNT">
    <location>
        <begin position="34"/>
        <end position="61"/>
    </location>
</feature>
<feature type="repeat" description="LRR 1">
    <location>
        <begin position="62"/>
        <end position="83"/>
    </location>
</feature>
<feature type="repeat" description="LRR 2">
    <location>
        <begin position="86"/>
        <end position="107"/>
    </location>
</feature>
<feature type="repeat" description="LRR 3">
    <location>
        <begin position="110"/>
        <end position="131"/>
    </location>
</feature>
<feature type="repeat" description="LRR 4">
    <location>
        <begin position="134"/>
        <end position="155"/>
    </location>
</feature>
<feature type="repeat" description="LRR 5">
    <location>
        <begin position="158"/>
        <end position="179"/>
    </location>
</feature>
<feature type="repeat" description="LRR 6">
    <location>
        <begin position="182"/>
        <end position="203"/>
    </location>
</feature>
<feature type="domain" description="LRRCT 1">
    <location>
        <begin position="215"/>
        <end position="265"/>
    </location>
</feature>
<feature type="domain" description="LRRNT 2">
    <location>
        <begin position="273"/>
        <end position="309"/>
    </location>
</feature>
<feature type="repeat" description="LRR 7">
    <location>
        <begin position="310"/>
        <end position="331"/>
    </location>
</feature>
<feature type="repeat" description="LRR 8">
    <location>
        <begin position="334"/>
        <end position="355"/>
    </location>
</feature>
<feature type="repeat" description="LRR 9">
    <location>
        <begin position="358"/>
        <end position="379"/>
    </location>
</feature>
<feature type="repeat" description="LRR 10">
    <location>
        <begin position="382"/>
        <end position="403"/>
    </location>
</feature>
<feature type="repeat" description="LRR 11">
    <location>
        <begin position="406"/>
        <end position="427"/>
    </location>
</feature>
<feature type="domain" description="LRRCT 2">
    <location>
        <begin position="439"/>
        <end position="489"/>
    </location>
</feature>
<feature type="domain" description="LRRNT 3">
    <location>
        <begin position="504"/>
        <end position="540"/>
    </location>
</feature>
<feature type="repeat" description="LRR 12">
    <location>
        <begin position="541"/>
        <end position="562"/>
    </location>
</feature>
<feature type="repeat" description="LRR 13">
    <location>
        <begin position="566"/>
        <end position="587"/>
    </location>
</feature>
<feature type="repeat" description="LRR 14">
    <location>
        <begin position="590"/>
        <end position="611"/>
    </location>
</feature>
<feature type="repeat" description="LRR 15">
    <location>
        <begin position="614"/>
        <end position="635"/>
    </location>
</feature>
<feature type="repeat" description="LRR 16">
    <location>
        <begin position="638"/>
        <end position="659"/>
    </location>
</feature>
<feature type="domain" description="LRRCT 3">
    <location>
        <begin position="671"/>
        <end position="721"/>
    </location>
</feature>
<feature type="domain" description="LRRNT 4">
    <location>
        <begin position="725"/>
        <end position="761"/>
    </location>
</feature>
<feature type="repeat" description="LRR 17">
    <location>
        <begin position="762"/>
        <end position="783"/>
    </location>
</feature>
<feature type="repeat" description="LRR 18">
    <location>
        <begin position="785"/>
        <end position="806"/>
    </location>
</feature>
<feature type="repeat" description="LRR 19">
    <location>
        <begin position="809"/>
        <end position="830"/>
    </location>
</feature>
<feature type="repeat" description="LRR 20">
    <location>
        <begin position="833"/>
        <end position="854"/>
    </location>
</feature>
<feature type="domain" description="LRRCT 4">
    <location>
        <begin position="866"/>
        <end position="916"/>
    </location>
</feature>
<feature type="domain" description="EGF-like 1" evidence="4">
    <location>
        <begin position="927"/>
        <end position="962"/>
    </location>
</feature>
<feature type="domain" description="EGF-like 2" evidence="4">
    <location>
        <begin position="964"/>
        <end position="1003"/>
    </location>
</feature>
<feature type="domain" description="EGF-like 3" evidence="4">
    <location>
        <begin position="1005"/>
        <end position="1041"/>
    </location>
</feature>
<feature type="domain" description="EGF-like 4" evidence="4">
    <location>
        <begin position="1043"/>
        <end position="1081"/>
    </location>
</feature>
<feature type="domain" description="EGF-like 5" evidence="4">
    <location>
        <begin position="1083"/>
        <end position="1119"/>
    </location>
</feature>
<feature type="domain" description="EGF-like 6" evidence="4">
    <location>
        <begin position="1124"/>
        <end position="1160"/>
    </location>
</feature>
<feature type="domain" description="Laminin G-like" evidence="5">
    <location>
        <begin position="1163"/>
        <end position="1336"/>
    </location>
</feature>
<feature type="domain" description="EGF-like 7" evidence="4">
    <location>
        <begin position="1337"/>
        <end position="1371"/>
    </location>
</feature>
<feature type="domain" description="EGF-like 8" evidence="4">
    <location>
        <begin position="1374"/>
        <end position="1410"/>
    </location>
</feature>
<feature type="domain" description="EGF-like 9" evidence="4">
    <location>
        <begin position="1415"/>
        <end position="1451"/>
    </location>
</feature>
<feature type="domain" description="CTCK" evidence="3">
    <location>
        <begin position="1456"/>
        <end position="1531"/>
    </location>
</feature>
<feature type="glycosylation site" description="N-linked (GlcNAc...) asparagine" evidence="2">
    <location>
        <position position="72"/>
    </location>
</feature>
<feature type="glycosylation site" description="N-linked (GlcNAc...) asparagine" evidence="2">
    <location>
        <position position="192"/>
    </location>
</feature>
<feature type="glycosylation site" description="N-linked (GlcNAc...) asparagine" evidence="2">
    <location>
        <position position="406"/>
    </location>
</feature>
<feature type="glycosylation site" description="N-linked (GlcNAc...) asparagine" evidence="2">
    <location>
        <position position="571"/>
    </location>
</feature>
<feature type="glycosylation site" description="N-linked (GlcNAc...) asparagine" evidence="2">
    <location>
        <position position="630"/>
    </location>
</feature>
<feature type="glycosylation site" description="N-linked (GlcNAc...) asparagine" evidence="2">
    <location>
        <position position="762"/>
    </location>
</feature>
<feature type="glycosylation site" description="N-linked (GlcNAc...) asparagine" evidence="2">
    <location>
        <position position="801"/>
    </location>
</feature>
<feature type="glycosylation site" description="N-linked (GlcNAc...) asparagine" evidence="2">
    <location>
        <position position="806"/>
    </location>
</feature>
<feature type="glycosylation site" description="N-linked (GlcNAc...) asparagine" evidence="2">
    <location>
        <position position="1026"/>
    </location>
</feature>
<feature type="glycosylation site" description="N-linked (GlcNAc...) asparagine" evidence="2">
    <location>
        <position position="1079"/>
    </location>
</feature>
<feature type="glycosylation site" description="N-linked (GlcNAc...) asparagine" evidence="2">
    <location>
        <position position="1186"/>
    </location>
</feature>
<feature type="glycosylation site" description="N-linked (GlcNAc...) asparagine" evidence="2">
    <location>
        <position position="1256"/>
    </location>
</feature>
<feature type="glycosylation site" description="N-linked (GlcNAc...) asparagine" evidence="2">
    <location>
        <position position="1303"/>
    </location>
</feature>
<feature type="disulfide bond" evidence="1">
    <location>
        <begin position="286"/>
        <end position="295"/>
    </location>
</feature>
<feature type="disulfide bond" evidence="1">
    <location>
        <begin position="443"/>
        <end position="466"/>
    </location>
</feature>
<feature type="disulfide bond" evidence="1">
    <location>
        <begin position="445"/>
        <end position="487"/>
    </location>
</feature>
<feature type="disulfide bond" evidence="1">
    <location>
        <begin position="513"/>
        <end position="519"/>
    </location>
</feature>
<feature type="disulfide bond" evidence="1">
    <location>
        <begin position="517"/>
        <end position="526"/>
    </location>
</feature>
<feature type="disulfide bond" evidence="1">
    <location>
        <begin position="675"/>
        <end position="698"/>
    </location>
</feature>
<feature type="disulfide bond" evidence="1">
    <location>
        <begin position="677"/>
        <end position="719"/>
    </location>
</feature>
<feature type="disulfide bond" evidence="1">
    <location>
        <begin position="929"/>
        <end position="940"/>
    </location>
</feature>
<feature type="disulfide bond" evidence="1">
    <location>
        <begin position="934"/>
        <end position="950"/>
    </location>
</feature>
<feature type="disulfide bond" evidence="1">
    <location>
        <begin position="952"/>
        <end position="961"/>
    </location>
</feature>
<feature type="disulfide bond" evidence="1">
    <location>
        <begin position="968"/>
        <end position="979"/>
    </location>
</feature>
<feature type="disulfide bond" evidence="1">
    <location>
        <begin position="973"/>
        <end position="991"/>
    </location>
</feature>
<feature type="disulfide bond" evidence="1">
    <location>
        <begin position="993"/>
        <end position="1002"/>
    </location>
</feature>
<feature type="disulfide bond" evidence="1">
    <location>
        <begin position="1009"/>
        <end position="1020"/>
    </location>
</feature>
<feature type="disulfide bond" evidence="1">
    <location>
        <begin position="1014"/>
        <end position="1029"/>
    </location>
</feature>
<feature type="disulfide bond" evidence="1">
    <location>
        <begin position="1031"/>
        <end position="1040"/>
    </location>
</feature>
<feature type="disulfide bond" evidence="1">
    <location>
        <begin position="1047"/>
        <end position="1060"/>
    </location>
</feature>
<feature type="disulfide bond" evidence="1">
    <location>
        <begin position="1054"/>
        <end position="1069"/>
    </location>
</feature>
<feature type="disulfide bond" evidence="1">
    <location>
        <begin position="1071"/>
        <end position="1080"/>
    </location>
</feature>
<feature type="disulfide bond" evidence="1">
    <location>
        <begin position="1087"/>
        <end position="1098"/>
    </location>
</feature>
<feature type="disulfide bond" evidence="1">
    <location>
        <begin position="1092"/>
        <end position="1107"/>
    </location>
</feature>
<feature type="disulfide bond" evidence="1">
    <location>
        <begin position="1109"/>
        <end position="1118"/>
    </location>
</feature>
<feature type="disulfide bond" evidence="1">
    <location>
        <begin position="1128"/>
        <end position="1139"/>
    </location>
</feature>
<feature type="disulfide bond" evidence="1">
    <location>
        <begin position="1133"/>
        <end position="1148"/>
    </location>
</feature>
<feature type="disulfide bond" evidence="1">
    <location>
        <begin position="1150"/>
        <end position="1159"/>
    </location>
</feature>
<feature type="disulfide bond" evidence="1">
    <location>
        <begin position="1310"/>
        <end position="1336"/>
    </location>
</feature>
<feature type="disulfide bond" evidence="1">
    <location>
        <begin position="1339"/>
        <end position="1349"/>
    </location>
</feature>
<feature type="disulfide bond" evidence="1">
    <location>
        <begin position="1344"/>
        <end position="1359"/>
    </location>
</feature>
<feature type="disulfide bond" evidence="1">
    <location>
        <begin position="1361"/>
        <end position="1370"/>
    </location>
</feature>
<feature type="disulfide bond" evidence="1">
    <location>
        <begin position="1378"/>
        <end position="1388"/>
    </location>
</feature>
<feature type="disulfide bond" evidence="1">
    <location>
        <begin position="1383"/>
        <end position="1398"/>
    </location>
</feature>
<feature type="disulfide bond" evidence="1">
    <location>
        <begin position="1400"/>
        <end position="1409"/>
    </location>
</feature>
<feature type="disulfide bond" evidence="1">
    <location>
        <begin position="1419"/>
        <end position="1429"/>
    </location>
</feature>
<feature type="disulfide bond" evidence="1">
    <location>
        <begin position="1424"/>
        <end position="1439"/>
    </location>
</feature>
<feature type="disulfide bond" evidence="1">
    <location>
        <begin position="1441"/>
        <end position="1450"/>
    </location>
</feature>
<feature type="disulfide bond" evidence="1">
    <location>
        <begin position="1456"/>
        <end position="1495"/>
    </location>
</feature>
<feature type="disulfide bond" evidence="1">
    <location>
        <begin position="1474"/>
        <end position="1509"/>
    </location>
</feature>
<feature type="disulfide bond" evidence="1">
    <location>
        <begin position="1485"/>
        <end position="1525"/>
    </location>
</feature>
<feature type="disulfide bond" evidence="1">
    <location>
        <begin position="1489"/>
        <end position="1527"/>
    </location>
</feature>
<feature type="splice variant" id="VSP_009709" description="In isoform 4." evidence="10">
    <location>
        <begin position="113"/>
        <end position="136"/>
    </location>
</feature>
<feature type="splice variant" id="VSP_009710" description="In isoform 2." evidence="10">
    <original>VGAVAEPCGGLQCLHGHCQASATRGAHCVCSPGFSGELCEQESECRGDPVRDFHRVQRGYAIC</original>
    <variation>SPSAGGTLSGTFTGSRGAMPSARPRAHCHGWNAGARARARAAARAAAEAEEAHLRVQRWDLVC</variation>
    <location>
        <begin position="1412"/>
        <end position="1474"/>
    </location>
</feature>
<feature type="splice variant" id="VSP_009712" description="In isoform 3." evidence="10">
    <original>ESECRG</original>
    <variation>GQGAPS</variation>
    <location>
        <begin position="1453"/>
        <end position="1458"/>
    </location>
</feature>
<feature type="splice variant" id="VSP_009713" description="In isoform 3." evidence="10">
    <location>
        <begin position="1459"/>
        <end position="1531"/>
    </location>
</feature>
<feature type="splice variant" id="VSP_009711" description="In isoform 2." evidence="10">
    <location>
        <begin position="1475"/>
        <end position="1531"/>
    </location>
</feature>
<feature type="sequence conflict" description="In Ref. 2; AAD25540." evidence="11" ref="2">
    <original>R</original>
    <variation>W</variation>
    <location>
        <position position="75"/>
    </location>
</feature>
<feature type="sequence conflict" description="In Ref. 2; AAD25540." evidence="11" ref="2">
    <original>Q</original>
    <variation>P</variation>
    <location>
        <position position="96"/>
    </location>
</feature>
<feature type="sequence conflict" description="In Ref. 3; BAC21666." evidence="11" ref="3">
    <original>V</original>
    <variation>A</variation>
    <location>
        <position position="100"/>
    </location>
</feature>
<feature type="sequence conflict" description="In Ref. 2; AAD25540." evidence="11" ref="2">
    <original>R</original>
    <variation>P</variation>
    <location>
        <position position="102"/>
    </location>
</feature>
<feature type="sequence conflict" description="In Ref. 3; BAC21665." evidence="11" ref="3">
    <original>M</original>
    <variation>V</variation>
    <location>
        <position position="108"/>
    </location>
</feature>
<feature type="sequence conflict" description="In Ref. 2; AAD25540." evidence="11" ref="2">
    <original>RLR</original>
    <variation>PFQ</variation>
    <location>
        <begin position="113"/>
        <end position="115"/>
    </location>
</feature>
<feature type="sequence conflict" description="In Ref. 2; AAD25540." evidence="11" ref="2">
    <original>V</original>
    <variation>M</variation>
    <location>
        <position position="123"/>
    </location>
</feature>
<feature type="sequence conflict" description="In Ref. 3; BAC21664." evidence="11" ref="3">
    <original>C</original>
    <variation>R</variation>
    <location>
        <position position="171"/>
    </location>
</feature>
<feature type="sequence conflict" description="In Ref. 3; BAC21665." evidence="11" ref="3">
    <original>S</original>
    <variation>T</variation>
    <location>
        <position position="264"/>
    </location>
</feature>
<feature type="sequence conflict" description="In Ref. 3; BAC21665." evidence="11" ref="3">
    <original>S</original>
    <variation>P</variation>
    <location>
        <position position="408"/>
    </location>
</feature>
<feature type="sequence conflict" description="In Ref. 3; BAC21665." evidence="11" ref="3">
    <original>IC</original>
    <variation>TW</variation>
    <location>
        <begin position="442"/>
        <end position="443"/>
    </location>
</feature>
<feature type="sequence conflict" description="In Ref. 3; BAC21666." evidence="11" ref="3">
    <original>S</original>
    <variation>T</variation>
    <location>
        <position position="468"/>
    </location>
</feature>
<feature type="sequence conflict" description="In Ref. 3; BAC21666." evidence="11" ref="3">
    <original>V</original>
    <variation>A</variation>
    <location>
        <position position="523"/>
    </location>
</feature>
<feature type="sequence conflict" description="In Ref. 2; AAD25540." evidence="11" ref="2">
    <original>RT</original>
    <variation>WS</variation>
    <location>
        <begin position="616"/>
        <end position="617"/>
    </location>
</feature>
<feature type="sequence conflict" description="In Ref. 3; BAC21665." evidence="11" ref="3">
    <original>I</original>
    <variation>T</variation>
    <location>
        <position position="652"/>
    </location>
</feature>
<feature type="sequence conflict" description="In Ref. 3; BAC21666." evidence="11" ref="3">
    <original>Q</original>
    <variation>H</variation>
    <location>
        <position position="699"/>
    </location>
</feature>
<feature type="sequence conflict" description="In Ref. 3; BAC21665." evidence="11" ref="3">
    <original>F</original>
    <variation>L</variation>
    <location>
        <position position="703"/>
    </location>
</feature>
<feature type="sequence conflict" description="In Ref. 3; BAC21665/BAC21666." evidence="11" ref="3">
    <original>A</original>
    <variation>T</variation>
    <location>
        <position position="739"/>
    </location>
</feature>
<feature type="sequence conflict" description="In Ref. 2; AAD25540." evidence="11" ref="2">
    <original>ALP</original>
    <variation>LL</variation>
    <location>
        <begin position="754"/>
        <end position="756"/>
    </location>
</feature>
<feature type="sequence conflict" description="In Ref. 3; BAC21666." evidence="11" ref="3">
    <original>A</original>
    <variation>T</variation>
    <location>
        <position position="921"/>
    </location>
</feature>
<feature type="sequence conflict" description="In Ref. 2; AAD25540." evidence="11" ref="2">
    <original>S</original>
    <variation>N</variation>
    <location>
        <position position="932"/>
    </location>
</feature>
<feature type="sequence conflict" description="In Ref. 3; BAC21665." evidence="11" ref="3">
    <original>D</original>
    <variation>N</variation>
    <location>
        <position position="1008"/>
    </location>
</feature>
<feature type="sequence conflict" description="In Ref. 3; BAC21666." evidence="11" ref="3">
    <original>D</original>
    <variation>A</variation>
    <location>
        <position position="1078"/>
    </location>
</feature>
<feature type="sequence conflict" description="In Ref. 3; BAC21666." evidence="11" ref="3">
    <original>N</original>
    <variation>T</variation>
    <location>
        <position position="1094"/>
    </location>
</feature>
<feature type="sequence conflict" description="In Ref. 3; BAC21665." evidence="11" ref="3">
    <original>C</original>
    <variation>R</variation>
    <location>
        <position position="1159"/>
    </location>
</feature>
<feature type="sequence conflict" description="In Ref. 2; AAD25540." evidence="11" ref="2">
    <original>E</original>
    <variation>K</variation>
    <location>
        <position position="1247"/>
    </location>
</feature>
<feature type="sequence conflict" description="In Ref. 3; BAC21665." evidence="11" ref="3">
    <original>N</original>
    <variation>D</variation>
    <location>
        <position position="1256"/>
    </location>
</feature>
<feature type="sequence conflict" description="In Ref. 2; AAD25540." evidence="11" ref="2">
    <original>S</original>
    <variation>F</variation>
    <location>
        <position position="1258"/>
    </location>
</feature>
<feature type="sequence conflict" description="In Ref. 2; AAD25540." evidence="11" ref="2">
    <original>APLY</original>
    <variation>GPPS</variation>
    <location>
        <begin position="1280"/>
        <end position="1283"/>
    </location>
</feature>
<feature type="sequence conflict" description="In Ref. 2; AAD25540." evidence="11" ref="2">
    <original>A</original>
    <variation>V</variation>
    <location>
        <position position="1433"/>
    </location>
</feature>
<organism>
    <name type="scientific">Rattus norvegicus</name>
    <name type="common">Rat</name>
    <dbReference type="NCBI Taxonomy" id="10116"/>
    <lineage>
        <taxon>Eukaryota</taxon>
        <taxon>Metazoa</taxon>
        <taxon>Chordata</taxon>
        <taxon>Craniata</taxon>
        <taxon>Vertebrata</taxon>
        <taxon>Euteleostomi</taxon>
        <taxon>Mammalia</taxon>
        <taxon>Eutheria</taxon>
        <taxon>Euarchontoglires</taxon>
        <taxon>Glires</taxon>
        <taxon>Rodentia</taxon>
        <taxon>Myomorpha</taxon>
        <taxon>Muroidea</taxon>
        <taxon>Muridae</taxon>
        <taxon>Murinae</taxon>
        <taxon>Rattus</taxon>
    </lineage>
</organism>
<dbReference type="EMBL" id="AB011530">
    <property type="protein sequence ID" value="BAA32460.1"/>
    <property type="molecule type" value="mRNA"/>
</dbReference>
<dbReference type="EMBL" id="AF133730">
    <property type="protein sequence ID" value="AAD25540.1"/>
    <property type="molecule type" value="mRNA"/>
</dbReference>
<dbReference type="EMBL" id="AB073213">
    <property type="protein sequence ID" value="BAC21664.1"/>
    <property type="status" value="ALT_INIT"/>
    <property type="molecule type" value="mRNA"/>
</dbReference>
<dbReference type="EMBL" id="AB073214">
    <property type="protein sequence ID" value="BAC21665.1"/>
    <property type="molecule type" value="mRNA"/>
</dbReference>
<dbReference type="EMBL" id="AB073215">
    <property type="protein sequence ID" value="BAC21666.1"/>
    <property type="molecule type" value="mRNA"/>
</dbReference>
<dbReference type="EMBL" id="AB017170">
    <property type="protein sequence ID" value="BAA35187.1"/>
    <property type="molecule type" value="mRNA"/>
</dbReference>
<dbReference type="PIR" id="T42218">
    <property type="entry name" value="T42218"/>
</dbReference>
<dbReference type="RefSeq" id="NP_075242.1">
    <molecule id="O88279-1"/>
    <property type="nucleotide sequence ID" value="NM_022953.2"/>
</dbReference>
<dbReference type="SMR" id="O88279"/>
<dbReference type="FunCoup" id="O88279">
    <property type="interactions" value="1055"/>
</dbReference>
<dbReference type="STRING" id="10116.ENSRNOP00000035315"/>
<dbReference type="GlyCosmos" id="O88279">
    <property type="glycosylation" value="13 sites, No reported glycans"/>
</dbReference>
<dbReference type="GlyGen" id="O88279">
    <property type="glycosylation" value="14 sites"/>
</dbReference>
<dbReference type="iPTMnet" id="O88279"/>
<dbReference type="PhosphoSitePlus" id="O88279"/>
<dbReference type="PaxDb" id="10116-ENSRNOP00000035315"/>
<dbReference type="Ensembl" id="ENSRNOT00000034758.7">
    <molecule id="O88279-1"/>
    <property type="protein sequence ID" value="ENSRNOP00000035315.5"/>
    <property type="gene ID" value="ENSRNOG00000026065.8"/>
</dbReference>
<dbReference type="Ensembl" id="ENSRNOT00000035415.7">
    <molecule id="O88279-4"/>
    <property type="protein sequence ID" value="ENSRNOP00000035180.7"/>
    <property type="gene ID" value="ENSRNOG00000026065.8"/>
</dbReference>
<dbReference type="Ensembl" id="ENSRNOT00000111197.1">
    <molecule id="O88279-3"/>
    <property type="protein sequence ID" value="ENSRNOP00000079283.1"/>
    <property type="gene ID" value="ENSRNOG00000026065.8"/>
</dbReference>
<dbReference type="GeneID" id="65047"/>
<dbReference type="KEGG" id="rno:65047"/>
<dbReference type="UCSC" id="RGD:69307">
    <molecule id="O88279-1"/>
    <property type="organism name" value="rat"/>
</dbReference>
<dbReference type="AGR" id="RGD:69307"/>
<dbReference type="CTD" id="6585"/>
<dbReference type="RGD" id="69307">
    <property type="gene designation" value="Slit1"/>
</dbReference>
<dbReference type="eggNOG" id="KOG4237">
    <property type="taxonomic scope" value="Eukaryota"/>
</dbReference>
<dbReference type="GeneTree" id="ENSGT00940000157322"/>
<dbReference type="InParanoid" id="O88279"/>
<dbReference type="OMA" id="ETKCQNN"/>
<dbReference type="OrthoDB" id="14638at9989"/>
<dbReference type="PhylomeDB" id="O88279"/>
<dbReference type="PRO" id="PR:O88279"/>
<dbReference type="Proteomes" id="UP000002494">
    <property type="component" value="Chromosome 1"/>
</dbReference>
<dbReference type="GO" id="GO:0005615">
    <property type="term" value="C:extracellular space"/>
    <property type="evidence" value="ECO:0000314"/>
    <property type="project" value="RGD"/>
</dbReference>
<dbReference type="GO" id="GO:0005509">
    <property type="term" value="F:calcium ion binding"/>
    <property type="evidence" value="ECO:0007669"/>
    <property type="project" value="InterPro"/>
</dbReference>
<dbReference type="GO" id="GO:0043395">
    <property type="term" value="F:heparan sulfate proteoglycan binding"/>
    <property type="evidence" value="ECO:0000314"/>
    <property type="project" value="RGD"/>
</dbReference>
<dbReference type="GO" id="GO:0008201">
    <property type="term" value="F:heparin binding"/>
    <property type="evidence" value="ECO:0000318"/>
    <property type="project" value="GO_Central"/>
</dbReference>
<dbReference type="GO" id="GO:0048495">
    <property type="term" value="F:Roundabout binding"/>
    <property type="evidence" value="ECO:0000266"/>
    <property type="project" value="RGD"/>
</dbReference>
<dbReference type="GO" id="GO:0048846">
    <property type="term" value="P:axon extension involved in axon guidance"/>
    <property type="evidence" value="ECO:0000266"/>
    <property type="project" value="RGD"/>
</dbReference>
<dbReference type="GO" id="GO:0007411">
    <property type="term" value="P:axon guidance"/>
    <property type="evidence" value="ECO:0000266"/>
    <property type="project" value="RGD"/>
</dbReference>
<dbReference type="GO" id="GO:0007409">
    <property type="term" value="P:axonogenesis"/>
    <property type="evidence" value="ECO:0000266"/>
    <property type="project" value="RGD"/>
</dbReference>
<dbReference type="GO" id="GO:0033563">
    <property type="term" value="P:dorsal/ventral axon guidance"/>
    <property type="evidence" value="ECO:0000266"/>
    <property type="project" value="RGD"/>
</dbReference>
<dbReference type="GO" id="GO:0008045">
    <property type="term" value="P:motor neuron axon guidance"/>
    <property type="evidence" value="ECO:0000266"/>
    <property type="project" value="RGD"/>
</dbReference>
<dbReference type="GO" id="GO:0050919">
    <property type="term" value="P:negative chemotaxis"/>
    <property type="evidence" value="ECO:0000266"/>
    <property type="project" value="RGD"/>
</dbReference>
<dbReference type="GO" id="GO:0048843">
    <property type="term" value="P:negative regulation of axon extension involved in axon guidance"/>
    <property type="evidence" value="ECO:0000314"/>
    <property type="project" value="RGD"/>
</dbReference>
<dbReference type="GO" id="GO:0051964">
    <property type="term" value="P:negative regulation of synapse assembly"/>
    <property type="evidence" value="ECO:0000250"/>
    <property type="project" value="UniProtKB"/>
</dbReference>
<dbReference type="GO" id="GO:0048812">
    <property type="term" value="P:neuron projection morphogenesis"/>
    <property type="evidence" value="ECO:0000266"/>
    <property type="project" value="RGD"/>
</dbReference>
<dbReference type="GO" id="GO:0007097">
    <property type="term" value="P:nuclear migration"/>
    <property type="evidence" value="ECO:0000266"/>
    <property type="project" value="RGD"/>
</dbReference>
<dbReference type="GO" id="GO:0021772">
    <property type="term" value="P:olfactory bulb development"/>
    <property type="evidence" value="ECO:0000266"/>
    <property type="project" value="RGD"/>
</dbReference>
<dbReference type="GO" id="GO:0031290">
    <property type="term" value="P:retinal ganglion cell axon guidance"/>
    <property type="evidence" value="ECO:0000266"/>
    <property type="project" value="RGD"/>
</dbReference>
<dbReference type="GO" id="GO:0021510">
    <property type="term" value="P:spinal cord development"/>
    <property type="evidence" value="ECO:0000270"/>
    <property type="project" value="RGD"/>
</dbReference>
<dbReference type="GO" id="GO:0022028">
    <property type="term" value="P:tangential migration from the subventricular zone to the olfactory bulb"/>
    <property type="evidence" value="ECO:0000266"/>
    <property type="project" value="RGD"/>
</dbReference>
<dbReference type="GO" id="GO:0022029">
    <property type="term" value="P:telencephalon cell migration"/>
    <property type="evidence" value="ECO:0000266"/>
    <property type="project" value="RGD"/>
</dbReference>
<dbReference type="CDD" id="cd00054">
    <property type="entry name" value="EGF_CA"/>
    <property type="match status" value="6"/>
</dbReference>
<dbReference type="CDD" id="cd00110">
    <property type="entry name" value="LamG"/>
    <property type="match status" value="1"/>
</dbReference>
<dbReference type="FunFam" id="2.10.25.10:FF:000080">
    <property type="entry name" value="Neurogenic locus notch 1"/>
    <property type="match status" value="1"/>
</dbReference>
<dbReference type="FunFam" id="3.80.10.10:FF:000290">
    <property type="entry name" value="Slit guidance ligand 1"/>
    <property type="match status" value="1"/>
</dbReference>
<dbReference type="FunFam" id="2.10.25.10:FF:000045">
    <property type="entry name" value="Slit guidance ligand 2"/>
    <property type="match status" value="1"/>
</dbReference>
<dbReference type="FunFam" id="2.10.25.10:FF:000053">
    <property type="entry name" value="Slit guidance ligand 2"/>
    <property type="match status" value="1"/>
</dbReference>
<dbReference type="FunFam" id="2.10.25.10:FF:000054">
    <property type="entry name" value="Slit guidance ligand 2"/>
    <property type="match status" value="1"/>
</dbReference>
<dbReference type="FunFam" id="2.10.25.10:FF:000062">
    <property type="entry name" value="Slit guidance ligand 2"/>
    <property type="match status" value="1"/>
</dbReference>
<dbReference type="FunFam" id="2.10.25.10:FF:000063">
    <property type="entry name" value="Slit guidance ligand 2"/>
    <property type="match status" value="1"/>
</dbReference>
<dbReference type="FunFam" id="2.60.120.200:FF:000013">
    <property type="entry name" value="Slit guidance ligand 2"/>
    <property type="match status" value="1"/>
</dbReference>
<dbReference type="FunFam" id="3.80.10.10:FF:000002">
    <property type="entry name" value="Slit guidance ligand 2"/>
    <property type="match status" value="2"/>
</dbReference>
<dbReference type="FunFam" id="3.80.10.10:FF:000004">
    <property type="entry name" value="Slit guidance ligand 2"/>
    <property type="match status" value="1"/>
</dbReference>
<dbReference type="FunFam" id="2.10.25.10:FF:000389">
    <property type="entry name" value="slit homolog 1 protein"/>
    <property type="match status" value="1"/>
</dbReference>
<dbReference type="FunFam" id="2.10.25.10:FF:000186">
    <property type="entry name" value="Slit homolog 2 (Drosophila)"/>
    <property type="match status" value="1"/>
</dbReference>
<dbReference type="FunFam" id="3.80.10.10:FF:000032">
    <property type="entry name" value="Slit homolog 2 (Drosophila)"/>
    <property type="match status" value="1"/>
</dbReference>
<dbReference type="Gene3D" id="2.60.120.200">
    <property type="match status" value="1"/>
</dbReference>
<dbReference type="Gene3D" id="2.10.25.10">
    <property type="entry name" value="Laminin"/>
    <property type="match status" value="8"/>
</dbReference>
<dbReference type="Gene3D" id="3.80.10.10">
    <property type="entry name" value="Ribonuclease Inhibitor"/>
    <property type="match status" value="5"/>
</dbReference>
<dbReference type="InterPro" id="IPR013320">
    <property type="entry name" value="ConA-like_dom_sf"/>
</dbReference>
<dbReference type="InterPro" id="IPR000483">
    <property type="entry name" value="Cys-rich_flank_reg_C"/>
</dbReference>
<dbReference type="InterPro" id="IPR006207">
    <property type="entry name" value="Cys_knot_C"/>
</dbReference>
<dbReference type="InterPro" id="IPR001881">
    <property type="entry name" value="EGF-like_Ca-bd_dom"/>
</dbReference>
<dbReference type="InterPro" id="IPR013032">
    <property type="entry name" value="EGF-like_CS"/>
</dbReference>
<dbReference type="InterPro" id="IPR000742">
    <property type="entry name" value="EGF-like_dom"/>
</dbReference>
<dbReference type="InterPro" id="IPR000152">
    <property type="entry name" value="EGF-type_Asp/Asn_hydroxyl_site"/>
</dbReference>
<dbReference type="InterPro" id="IPR018097">
    <property type="entry name" value="EGF_Ca-bd_CS"/>
</dbReference>
<dbReference type="InterPro" id="IPR003645">
    <property type="entry name" value="Fol_N"/>
</dbReference>
<dbReference type="InterPro" id="IPR009030">
    <property type="entry name" value="Growth_fac_rcpt_cys_sf"/>
</dbReference>
<dbReference type="InterPro" id="IPR001791">
    <property type="entry name" value="Laminin_G"/>
</dbReference>
<dbReference type="InterPro" id="IPR001611">
    <property type="entry name" value="Leu-rich_rpt"/>
</dbReference>
<dbReference type="InterPro" id="IPR003591">
    <property type="entry name" value="Leu-rich_rpt_typical-subtyp"/>
</dbReference>
<dbReference type="InterPro" id="IPR032675">
    <property type="entry name" value="LRR_dom_sf"/>
</dbReference>
<dbReference type="InterPro" id="IPR000372">
    <property type="entry name" value="LRRNT"/>
</dbReference>
<dbReference type="InterPro" id="IPR051355">
    <property type="entry name" value="Notch/Slit_guidance"/>
</dbReference>
<dbReference type="PANTHER" id="PTHR45836">
    <property type="entry name" value="SLIT HOMOLOG"/>
    <property type="match status" value="1"/>
</dbReference>
<dbReference type="PANTHER" id="PTHR45836:SF3">
    <property type="entry name" value="SLIT HOMOLOG 1 PROTEIN"/>
    <property type="match status" value="1"/>
</dbReference>
<dbReference type="Pfam" id="PF00008">
    <property type="entry name" value="EGF"/>
    <property type="match status" value="4"/>
</dbReference>
<dbReference type="Pfam" id="PF12661">
    <property type="entry name" value="hEGF"/>
    <property type="match status" value="2"/>
</dbReference>
<dbReference type="Pfam" id="PF02210">
    <property type="entry name" value="Laminin_G_2"/>
    <property type="match status" value="1"/>
</dbReference>
<dbReference type="Pfam" id="PF13855">
    <property type="entry name" value="LRR_8"/>
    <property type="match status" value="6"/>
</dbReference>
<dbReference type="Pfam" id="PF01463">
    <property type="entry name" value="LRRCT"/>
    <property type="match status" value="4"/>
</dbReference>
<dbReference type="Pfam" id="PF01462">
    <property type="entry name" value="LRRNT"/>
    <property type="match status" value="4"/>
</dbReference>
<dbReference type="SMART" id="SM00041">
    <property type="entry name" value="CT"/>
    <property type="match status" value="1"/>
</dbReference>
<dbReference type="SMART" id="SM00181">
    <property type="entry name" value="EGF"/>
    <property type="match status" value="9"/>
</dbReference>
<dbReference type="SMART" id="SM00179">
    <property type="entry name" value="EGF_CA"/>
    <property type="match status" value="7"/>
</dbReference>
<dbReference type="SMART" id="SM00274">
    <property type="entry name" value="FOLN"/>
    <property type="match status" value="3"/>
</dbReference>
<dbReference type="SMART" id="SM00282">
    <property type="entry name" value="LamG"/>
    <property type="match status" value="1"/>
</dbReference>
<dbReference type="SMART" id="SM00364">
    <property type="entry name" value="LRR_BAC"/>
    <property type="match status" value="6"/>
</dbReference>
<dbReference type="SMART" id="SM00365">
    <property type="entry name" value="LRR_SD22"/>
    <property type="match status" value="8"/>
</dbReference>
<dbReference type="SMART" id="SM00369">
    <property type="entry name" value="LRR_TYP"/>
    <property type="match status" value="18"/>
</dbReference>
<dbReference type="SMART" id="SM00082">
    <property type="entry name" value="LRRCT"/>
    <property type="match status" value="4"/>
</dbReference>
<dbReference type="SMART" id="SM00013">
    <property type="entry name" value="LRRNT"/>
    <property type="match status" value="4"/>
</dbReference>
<dbReference type="SUPFAM" id="SSF49899">
    <property type="entry name" value="Concanavalin A-like lectins/glucanases"/>
    <property type="match status" value="1"/>
</dbReference>
<dbReference type="SUPFAM" id="SSF57196">
    <property type="entry name" value="EGF/Laminin"/>
    <property type="match status" value="3"/>
</dbReference>
<dbReference type="SUPFAM" id="SSF57184">
    <property type="entry name" value="Growth factor receptor domain"/>
    <property type="match status" value="1"/>
</dbReference>
<dbReference type="SUPFAM" id="SSF52058">
    <property type="entry name" value="L domain-like"/>
    <property type="match status" value="2"/>
</dbReference>
<dbReference type="PROSITE" id="PS01185">
    <property type="entry name" value="CTCK_1"/>
    <property type="match status" value="1"/>
</dbReference>
<dbReference type="PROSITE" id="PS01225">
    <property type="entry name" value="CTCK_2"/>
    <property type="match status" value="1"/>
</dbReference>
<dbReference type="PROSITE" id="PS00022">
    <property type="entry name" value="EGF_1"/>
    <property type="match status" value="9"/>
</dbReference>
<dbReference type="PROSITE" id="PS01186">
    <property type="entry name" value="EGF_2"/>
    <property type="match status" value="8"/>
</dbReference>
<dbReference type="PROSITE" id="PS50026">
    <property type="entry name" value="EGF_3"/>
    <property type="match status" value="9"/>
</dbReference>
<dbReference type="PROSITE" id="PS01187">
    <property type="entry name" value="EGF_CA"/>
    <property type="match status" value="2"/>
</dbReference>
<dbReference type="PROSITE" id="PS50025">
    <property type="entry name" value="LAM_G_DOMAIN"/>
    <property type="match status" value="1"/>
</dbReference>
<dbReference type="PROSITE" id="PS51450">
    <property type="entry name" value="LRR"/>
    <property type="match status" value="20"/>
</dbReference>
<accession>O88279</accession>
<accession>Q8CJG8</accession>
<accession>Q8CJG9</accession>
<accession>Q8CJH0</accession>
<accession>Q9QWL1</accession>
<accession>Q9WUG5</accession>
<reference key="1">
    <citation type="journal article" date="1998" name="Genomics">
        <title>Identification of high-molecular-weight proteins with multiple EGF-like motifs by motif-trap screening.</title>
        <authorList>
            <person name="Nakayama M."/>
            <person name="Nakajima D."/>
            <person name="Nagase T."/>
            <person name="Nomura N."/>
            <person name="Seki N."/>
            <person name="Ohara O."/>
        </authorList>
    </citation>
    <scope>NUCLEOTIDE SEQUENCE [MRNA]</scope>
    <source>
        <strain>Sprague-Dawley</strain>
        <tissue>Brain</tissue>
    </source>
</reference>
<reference key="2">
    <citation type="journal article" date="1999" name="Cell">
        <title>Slit proteins bind Robo receptors and have an evolutionarily conserved role in repulsive axon guidance.</title>
        <authorList>
            <person name="Brose K."/>
            <person name="Bland K.S."/>
            <person name="Wang K.H."/>
            <person name="Arnott D."/>
            <person name="Henzel W."/>
            <person name="Goodman C.S."/>
            <person name="Tessier-Lavigne M."/>
            <person name="Kidd T."/>
        </authorList>
    </citation>
    <scope>NUCLEOTIDE SEQUENCE [MRNA]</scope>
</reference>
<reference key="3">
    <citation type="submission" date="2001-10" db="EMBL/GenBank/DDBJ databases">
        <title>Alternative splicing for slit-1 in rat brain.</title>
        <authorList>
            <person name="Tanno T."/>
        </authorList>
    </citation>
    <scope>NUCLEOTIDE SEQUENCE [MRNA] (ISOFORMS 2; 3 AND 4)</scope>
    <source>
        <strain>Sprague-Dawley</strain>
        <tissue>Brain</tissue>
    </source>
</reference>
<reference key="4">
    <citation type="journal article" date="1998" name="Brain Res. Mol. Brain Res.">
        <title>Cloning and expressions of three mammalian homologues of Drosophila slit suggest possible roles for Slit in the formation and maintenance of the nervous system.</title>
        <authorList>
            <person name="Itoh A."/>
            <person name="Miyabayashi T."/>
            <person name="Ohno M."/>
            <person name="Sakano S."/>
        </authorList>
    </citation>
    <scope>NUCLEOTIDE SEQUENCE [MRNA] OF 1209-1404 (ISOFORMS 1/2/3/4)</scope>
    <scope>TISSUE SPECIFICITY</scope>
</reference>
<reference key="5">
    <citation type="journal article" date="2000" name="J. Neurosci.">
        <title>Slit inhibition of retinal axon growth and its role in retinal axon pathfinding and innervation patterns in the diencephalon.</title>
        <authorList>
            <person name="Ringstedt T."/>
            <person name="Braisted J.E."/>
            <person name="Brose K."/>
            <person name="Kidd T."/>
            <person name="Goodman C."/>
            <person name="Tessier-Lavigne M."/>
            <person name="O'Leary D.D."/>
        </authorList>
    </citation>
    <scope>FUNCTION</scope>
</reference>
<reference key="6">
    <citation type="journal article" date="2002" name="J. Comp. Neurol.">
        <title>Spatiotemporal expression patterns of slit and robo genes in the rat brain.</title>
        <authorList>
            <person name="Marillat V."/>
            <person name="Cases O."/>
            <person name="Nguyen-Ba-Charvet K.T."/>
            <person name="Tessier-Lavigne M."/>
            <person name="Sotelo C."/>
            <person name="Chedotal A."/>
        </authorList>
    </citation>
    <scope>DEVELOPMENTAL STAGE</scope>
</reference>
<reference key="7">
    <citation type="journal article" date="2004" name="J. Immunol.">
        <title>Bone morphogenetic protein antagonists Drm/Gremlin and Dan interact with Slits and act as negative regulators of monocyte chemotaxis.</title>
        <authorList>
            <person name="Chen B."/>
            <person name="Blair D.G."/>
            <person name="Plisov S."/>
            <person name="Vasiliev G."/>
            <person name="Perantoni A.O."/>
            <person name="Chen Q."/>
            <person name="Athanasiou M."/>
            <person name="Wu J.Y."/>
            <person name="Oppenheim J.J."/>
            <person name="Yang D."/>
        </authorList>
    </citation>
    <scope>INTERACTION WITH GREM1</scope>
</reference>
<gene>
    <name type="primary">Slit1</name>
    <name type="synonym">Megf4</name>
</gene>
<keyword id="KW-0025">Alternative splicing</keyword>
<keyword id="KW-0217">Developmental protein</keyword>
<keyword id="KW-0221">Differentiation</keyword>
<keyword id="KW-1015">Disulfide bond</keyword>
<keyword id="KW-0245">EGF-like domain</keyword>
<keyword id="KW-0325">Glycoprotein</keyword>
<keyword id="KW-0433">Leucine-rich repeat</keyword>
<keyword id="KW-0524">Neurogenesis</keyword>
<keyword id="KW-1185">Reference proteome</keyword>
<keyword id="KW-0677">Repeat</keyword>
<keyword id="KW-0964">Secreted</keyword>
<keyword id="KW-0732">Signal</keyword>
<name>SLIT1_RAT</name>